<accession>Q46WF8</accession>
<feature type="chain" id="PRO_0000225887" description="Small ribosomal subunit protein uS8">
    <location>
        <begin position="1"/>
        <end position="131"/>
    </location>
</feature>
<keyword id="KW-0687">Ribonucleoprotein</keyword>
<keyword id="KW-0689">Ribosomal protein</keyword>
<keyword id="KW-0694">RNA-binding</keyword>
<keyword id="KW-0699">rRNA-binding</keyword>
<reference key="1">
    <citation type="journal article" date="2010" name="PLoS ONE">
        <title>The complete multipartite genome sequence of Cupriavidus necator JMP134, a versatile pollutant degrader.</title>
        <authorList>
            <person name="Lykidis A."/>
            <person name="Perez-Pantoja D."/>
            <person name="Ledger T."/>
            <person name="Mavromatis K."/>
            <person name="Anderson I.J."/>
            <person name="Ivanova N.N."/>
            <person name="Hooper S.D."/>
            <person name="Lapidus A."/>
            <person name="Lucas S."/>
            <person name="Gonzalez B."/>
            <person name="Kyrpides N.C."/>
        </authorList>
    </citation>
    <scope>NUCLEOTIDE SEQUENCE [LARGE SCALE GENOMIC DNA]</scope>
    <source>
        <strain>JMP134 / LMG 1197</strain>
    </source>
</reference>
<comment type="function">
    <text evidence="1">One of the primary rRNA binding proteins, it binds directly to 16S rRNA central domain where it helps coordinate assembly of the platform of the 30S subunit.</text>
</comment>
<comment type="subunit">
    <text evidence="1">Part of the 30S ribosomal subunit. Contacts proteins S5 and S12.</text>
</comment>
<comment type="similarity">
    <text evidence="1">Belongs to the universal ribosomal protein uS8 family.</text>
</comment>
<proteinExistence type="inferred from homology"/>
<sequence length="131" mass="14098">MSMSDPIADMLTRIRNAQGVQKASVVMPSSKLKVAIAKVLKDEGYIDDYAVQEDGGKAQLSIGLKYYAGRPVIERIERVSKPGLRVYKGRSDIPQVMNGLGVAIISTPQGLMTDRKARATGVGGEVLCYVA</sequence>
<protein>
    <recommendedName>
        <fullName evidence="1">Small ribosomal subunit protein uS8</fullName>
    </recommendedName>
    <alternativeName>
        <fullName evidence="2">30S ribosomal protein S8</fullName>
    </alternativeName>
</protein>
<evidence type="ECO:0000255" key="1">
    <source>
        <dbReference type="HAMAP-Rule" id="MF_01302"/>
    </source>
</evidence>
<evidence type="ECO:0000305" key="2"/>
<gene>
    <name evidence="1" type="primary">rpsH</name>
    <name type="ordered locus">Reut_A3165</name>
</gene>
<dbReference type="EMBL" id="CP000090">
    <property type="protein sequence ID" value="AAZ62525.1"/>
    <property type="molecule type" value="Genomic_DNA"/>
</dbReference>
<dbReference type="SMR" id="Q46WF8"/>
<dbReference type="STRING" id="264198.Reut_A3165"/>
<dbReference type="KEGG" id="reu:Reut_A3165"/>
<dbReference type="eggNOG" id="COG0096">
    <property type="taxonomic scope" value="Bacteria"/>
</dbReference>
<dbReference type="HOGENOM" id="CLU_098428_0_0_4"/>
<dbReference type="OrthoDB" id="9802617at2"/>
<dbReference type="GO" id="GO:1990904">
    <property type="term" value="C:ribonucleoprotein complex"/>
    <property type="evidence" value="ECO:0007669"/>
    <property type="project" value="UniProtKB-KW"/>
</dbReference>
<dbReference type="GO" id="GO:0005840">
    <property type="term" value="C:ribosome"/>
    <property type="evidence" value="ECO:0007669"/>
    <property type="project" value="UniProtKB-KW"/>
</dbReference>
<dbReference type="GO" id="GO:0019843">
    <property type="term" value="F:rRNA binding"/>
    <property type="evidence" value="ECO:0007669"/>
    <property type="project" value="UniProtKB-UniRule"/>
</dbReference>
<dbReference type="GO" id="GO:0003735">
    <property type="term" value="F:structural constituent of ribosome"/>
    <property type="evidence" value="ECO:0007669"/>
    <property type="project" value="InterPro"/>
</dbReference>
<dbReference type="GO" id="GO:0006412">
    <property type="term" value="P:translation"/>
    <property type="evidence" value="ECO:0007669"/>
    <property type="project" value="UniProtKB-UniRule"/>
</dbReference>
<dbReference type="FunFam" id="3.30.1370.30:FF:000002">
    <property type="entry name" value="30S ribosomal protein S8"/>
    <property type="match status" value="1"/>
</dbReference>
<dbReference type="FunFam" id="3.30.1490.10:FF:000001">
    <property type="entry name" value="30S ribosomal protein S8"/>
    <property type="match status" value="1"/>
</dbReference>
<dbReference type="Gene3D" id="3.30.1370.30">
    <property type="match status" value="1"/>
</dbReference>
<dbReference type="Gene3D" id="3.30.1490.10">
    <property type="match status" value="1"/>
</dbReference>
<dbReference type="HAMAP" id="MF_01302_B">
    <property type="entry name" value="Ribosomal_uS8_B"/>
    <property type="match status" value="1"/>
</dbReference>
<dbReference type="InterPro" id="IPR000630">
    <property type="entry name" value="Ribosomal_uS8"/>
</dbReference>
<dbReference type="InterPro" id="IPR047863">
    <property type="entry name" value="Ribosomal_uS8_CS"/>
</dbReference>
<dbReference type="InterPro" id="IPR035987">
    <property type="entry name" value="Ribosomal_uS8_sf"/>
</dbReference>
<dbReference type="NCBIfam" id="NF001109">
    <property type="entry name" value="PRK00136.1"/>
    <property type="match status" value="1"/>
</dbReference>
<dbReference type="PANTHER" id="PTHR11758">
    <property type="entry name" value="40S RIBOSOMAL PROTEIN S15A"/>
    <property type="match status" value="1"/>
</dbReference>
<dbReference type="Pfam" id="PF00410">
    <property type="entry name" value="Ribosomal_S8"/>
    <property type="match status" value="1"/>
</dbReference>
<dbReference type="SUPFAM" id="SSF56047">
    <property type="entry name" value="Ribosomal protein S8"/>
    <property type="match status" value="1"/>
</dbReference>
<dbReference type="PROSITE" id="PS00053">
    <property type="entry name" value="RIBOSOMAL_S8"/>
    <property type="match status" value="1"/>
</dbReference>
<name>RS8_CUPPJ</name>
<organism>
    <name type="scientific">Cupriavidus pinatubonensis (strain JMP 134 / LMG 1197)</name>
    <name type="common">Cupriavidus necator (strain JMP 134)</name>
    <dbReference type="NCBI Taxonomy" id="264198"/>
    <lineage>
        <taxon>Bacteria</taxon>
        <taxon>Pseudomonadati</taxon>
        <taxon>Pseudomonadota</taxon>
        <taxon>Betaproteobacteria</taxon>
        <taxon>Burkholderiales</taxon>
        <taxon>Burkholderiaceae</taxon>
        <taxon>Cupriavidus</taxon>
    </lineage>
</organism>